<reference key="1">
    <citation type="journal article" date="2006" name="Proc. Natl. Acad. Sci. U.S.A.">
        <title>The partitioned Rhizobium etli genome: genetic and metabolic redundancy in seven interacting replicons.</title>
        <authorList>
            <person name="Gonzalez V."/>
            <person name="Santamaria R.I."/>
            <person name="Bustos P."/>
            <person name="Hernandez-Gonzalez I."/>
            <person name="Medrano-Soto A."/>
            <person name="Moreno-Hagelsieb G."/>
            <person name="Janga S.C."/>
            <person name="Ramirez M.A."/>
            <person name="Jimenez-Jacinto V."/>
            <person name="Collado-Vides J."/>
            <person name="Davila G."/>
        </authorList>
    </citation>
    <scope>NUCLEOTIDE SEQUENCE [LARGE SCALE GENOMIC DNA]</scope>
    <source>
        <strain>ATCC 51251 / DSM 11541 / JCM 21823 / NBRC 15573 / CFN 42</strain>
    </source>
</reference>
<organism>
    <name type="scientific">Rhizobium etli (strain ATCC 51251 / DSM 11541 / JCM 21823 / NBRC 15573 / CFN 42)</name>
    <dbReference type="NCBI Taxonomy" id="347834"/>
    <lineage>
        <taxon>Bacteria</taxon>
        <taxon>Pseudomonadati</taxon>
        <taxon>Pseudomonadota</taxon>
        <taxon>Alphaproteobacteria</taxon>
        <taxon>Hyphomicrobiales</taxon>
        <taxon>Rhizobiaceae</taxon>
        <taxon>Rhizobium/Agrobacterium group</taxon>
        <taxon>Rhizobium</taxon>
    </lineage>
</organism>
<protein>
    <recommendedName>
        <fullName evidence="1">Large ribosomal subunit protein uL23</fullName>
    </recommendedName>
    <alternativeName>
        <fullName evidence="2">50S ribosomal protein L23</fullName>
    </alternativeName>
</protein>
<feature type="chain" id="PRO_0000272817" description="Large ribosomal subunit protein uL23">
    <location>
        <begin position="1"/>
        <end position="97"/>
    </location>
</feature>
<accession>Q2K9L4</accession>
<sequence length="97" mass="10543">MTDLRHYDVIVSPAITEKSTLVSENNQVVFNVAKQATKPEIKAAVEALFGVKVTAVNTLLRKGKTKRFRGFVGKQKDVKKAVVTLAEGQTIDVSTGL</sequence>
<gene>
    <name evidence="1" type="primary">rplW</name>
    <name type="ordered locus">RHE_CH01677</name>
</gene>
<name>RL23_RHIEC</name>
<evidence type="ECO:0000255" key="1">
    <source>
        <dbReference type="HAMAP-Rule" id="MF_01369"/>
    </source>
</evidence>
<evidence type="ECO:0000305" key="2"/>
<keyword id="KW-1185">Reference proteome</keyword>
<keyword id="KW-0687">Ribonucleoprotein</keyword>
<keyword id="KW-0689">Ribosomal protein</keyword>
<keyword id="KW-0694">RNA-binding</keyword>
<keyword id="KW-0699">rRNA-binding</keyword>
<proteinExistence type="inferred from homology"/>
<comment type="function">
    <text evidence="1">One of the early assembly proteins it binds 23S rRNA. One of the proteins that surrounds the polypeptide exit tunnel on the outside of the ribosome. Forms the main docking site for trigger factor binding to the ribosome.</text>
</comment>
<comment type="subunit">
    <text evidence="1">Part of the 50S ribosomal subunit. Contacts protein L29, and trigger factor when it is bound to the ribosome.</text>
</comment>
<comment type="similarity">
    <text evidence="1">Belongs to the universal ribosomal protein uL23 family.</text>
</comment>
<dbReference type="EMBL" id="CP000133">
    <property type="protein sequence ID" value="ABC90472.1"/>
    <property type="molecule type" value="Genomic_DNA"/>
</dbReference>
<dbReference type="RefSeq" id="WP_003547550.1">
    <property type="nucleotide sequence ID" value="NC_007761.1"/>
</dbReference>
<dbReference type="SMR" id="Q2K9L4"/>
<dbReference type="KEGG" id="ret:RHE_CH01677"/>
<dbReference type="eggNOG" id="COG0089">
    <property type="taxonomic scope" value="Bacteria"/>
</dbReference>
<dbReference type="HOGENOM" id="CLU_037562_3_1_5"/>
<dbReference type="OrthoDB" id="9793353at2"/>
<dbReference type="Proteomes" id="UP000001936">
    <property type="component" value="Chromosome"/>
</dbReference>
<dbReference type="GO" id="GO:1990904">
    <property type="term" value="C:ribonucleoprotein complex"/>
    <property type="evidence" value="ECO:0007669"/>
    <property type="project" value="UniProtKB-KW"/>
</dbReference>
<dbReference type="GO" id="GO:0005840">
    <property type="term" value="C:ribosome"/>
    <property type="evidence" value="ECO:0007669"/>
    <property type="project" value="UniProtKB-KW"/>
</dbReference>
<dbReference type="GO" id="GO:0019843">
    <property type="term" value="F:rRNA binding"/>
    <property type="evidence" value="ECO:0007669"/>
    <property type="project" value="UniProtKB-UniRule"/>
</dbReference>
<dbReference type="GO" id="GO:0003735">
    <property type="term" value="F:structural constituent of ribosome"/>
    <property type="evidence" value="ECO:0007669"/>
    <property type="project" value="InterPro"/>
</dbReference>
<dbReference type="GO" id="GO:0006412">
    <property type="term" value="P:translation"/>
    <property type="evidence" value="ECO:0007669"/>
    <property type="project" value="UniProtKB-UniRule"/>
</dbReference>
<dbReference type="FunFam" id="3.30.70.330:FF:000001">
    <property type="entry name" value="50S ribosomal protein L23"/>
    <property type="match status" value="1"/>
</dbReference>
<dbReference type="Gene3D" id="3.30.70.330">
    <property type="match status" value="1"/>
</dbReference>
<dbReference type="HAMAP" id="MF_01369_B">
    <property type="entry name" value="Ribosomal_uL23_B"/>
    <property type="match status" value="1"/>
</dbReference>
<dbReference type="InterPro" id="IPR012677">
    <property type="entry name" value="Nucleotide-bd_a/b_plait_sf"/>
</dbReference>
<dbReference type="InterPro" id="IPR013025">
    <property type="entry name" value="Ribosomal_uL23-like"/>
</dbReference>
<dbReference type="InterPro" id="IPR012678">
    <property type="entry name" value="Ribosomal_uL23/eL15/eS24_sf"/>
</dbReference>
<dbReference type="NCBIfam" id="NF004359">
    <property type="entry name" value="PRK05738.1-3"/>
    <property type="match status" value="1"/>
</dbReference>
<dbReference type="NCBIfam" id="NF004360">
    <property type="entry name" value="PRK05738.1-5"/>
    <property type="match status" value="1"/>
</dbReference>
<dbReference type="NCBIfam" id="NF004363">
    <property type="entry name" value="PRK05738.2-4"/>
    <property type="match status" value="1"/>
</dbReference>
<dbReference type="PANTHER" id="PTHR11620">
    <property type="entry name" value="60S RIBOSOMAL PROTEIN L23A"/>
    <property type="match status" value="1"/>
</dbReference>
<dbReference type="Pfam" id="PF00276">
    <property type="entry name" value="Ribosomal_L23"/>
    <property type="match status" value="1"/>
</dbReference>
<dbReference type="SUPFAM" id="SSF54189">
    <property type="entry name" value="Ribosomal proteins S24e, L23 and L15e"/>
    <property type="match status" value="1"/>
</dbReference>